<feature type="chain" id="PRO_0000325444" description="Anthranilate phosphoribosyltransferase">
    <location>
        <begin position="1"/>
        <end position="341"/>
    </location>
</feature>
<feature type="binding site" evidence="1">
    <location>
        <position position="81"/>
    </location>
    <ligand>
        <name>5-phospho-alpha-D-ribose 1-diphosphate</name>
        <dbReference type="ChEBI" id="CHEBI:58017"/>
    </ligand>
</feature>
<feature type="binding site" evidence="1">
    <location>
        <position position="81"/>
    </location>
    <ligand>
        <name>anthranilate</name>
        <dbReference type="ChEBI" id="CHEBI:16567"/>
        <label>1</label>
    </ligand>
</feature>
<feature type="binding site" evidence="1">
    <location>
        <begin position="84"/>
        <end position="85"/>
    </location>
    <ligand>
        <name>5-phospho-alpha-D-ribose 1-diphosphate</name>
        <dbReference type="ChEBI" id="CHEBI:58017"/>
    </ligand>
</feature>
<feature type="binding site" evidence="1">
    <location>
        <position position="89"/>
    </location>
    <ligand>
        <name>5-phospho-alpha-D-ribose 1-diphosphate</name>
        <dbReference type="ChEBI" id="CHEBI:58017"/>
    </ligand>
</feature>
<feature type="binding site" evidence="1">
    <location>
        <begin position="91"/>
        <end position="94"/>
    </location>
    <ligand>
        <name>5-phospho-alpha-D-ribose 1-diphosphate</name>
        <dbReference type="ChEBI" id="CHEBI:58017"/>
    </ligand>
</feature>
<feature type="binding site" evidence="1">
    <location>
        <position position="93"/>
    </location>
    <ligand>
        <name>Mg(2+)</name>
        <dbReference type="ChEBI" id="CHEBI:18420"/>
        <label>1</label>
    </ligand>
</feature>
<feature type="binding site" evidence="1">
    <location>
        <begin position="109"/>
        <end position="117"/>
    </location>
    <ligand>
        <name>5-phospho-alpha-D-ribose 1-diphosphate</name>
        <dbReference type="ChEBI" id="CHEBI:58017"/>
    </ligand>
</feature>
<feature type="binding site" evidence="1">
    <location>
        <position position="112"/>
    </location>
    <ligand>
        <name>anthranilate</name>
        <dbReference type="ChEBI" id="CHEBI:16567"/>
        <label>1</label>
    </ligand>
</feature>
<feature type="binding site" evidence="1">
    <location>
        <position position="121"/>
    </location>
    <ligand>
        <name>5-phospho-alpha-D-ribose 1-diphosphate</name>
        <dbReference type="ChEBI" id="CHEBI:58017"/>
    </ligand>
</feature>
<feature type="binding site" evidence="1">
    <location>
        <position position="167"/>
    </location>
    <ligand>
        <name>anthranilate</name>
        <dbReference type="ChEBI" id="CHEBI:16567"/>
        <label>2</label>
    </ligand>
</feature>
<feature type="binding site" evidence="1">
    <location>
        <position position="225"/>
    </location>
    <ligand>
        <name>Mg(2+)</name>
        <dbReference type="ChEBI" id="CHEBI:18420"/>
        <label>2</label>
    </ligand>
</feature>
<feature type="binding site" evidence="1">
    <location>
        <position position="226"/>
    </location>
    <ligand>
        <name>Mg(2+)</name>
        <dbReference type="ChEBI" id="CHEBI:18420"/>
        <label>1</label>
    </ligand>
</feature>
<feature type="binding site" evidence="1">
    <location>
        <position position="226"/>
    </location>
    <ligand>
        <name>Mg(2+)</name>
        <dbReference type="ChEBI" id="CHEBI:18420"/>
        <label>2</label>
    </ligand>
</feature>
<name>TRPD_NOCSJ</name>
<reference key="1">
    <citation type="submission" date="2006-12" db="EMBL/GenBank/DDBJ databases">
        <title>Complete sequence of chromosome 1 of Nocardioides sp. JS614.</title>
        <authorList>
            <person name="Copeland A."/>
            <person name="Lucas S."/>
            <person name="Lapidus A."/>
            <person name="Barry K."/>
            <person name="Detter J.C."/>
            <person name="Glavina del Rio T."/>
            <person name="Hammon N."/>
            <person name="Israni S."/>
            <person name="Dalin E."/>
            <person name="Tice H."/>
            <person name="Pitluck S."/>
            <person name="Thompson L.S."/>
            <person name="Brettin T."/>
            <person name="Bruce D."/>
            <person name="Han C."/>
            <person name="Tapia R."/>
            <person name="Schmutz J."/>
            <person name="Larimer F."/>
            <person name="Land M."/>
            <person name="Hauser L."/>
            <person name="Kyrpides N."/>
            <person name="Kim E."/>
            <person name="Mattes T."/>
            <person name="Gossett J."/>
            <person name="Richardson P."/>
        </authorList>
    </citation>
    <scope>NUCLEOTIDE SEQUENCE [LARGE SCALE GENOMIC DNA]</scope>
    <source>
        <strain>ATCC BAA-499 / JS614</strain>
    </source>
</reference>
<protein>
    <recommendedName>
        <fullName evidence="1">Anthranilate phosphoribosyltransferase</fullName>
        <ecNumber evidence="1">2.4.2.18</ecNumber>
    </recommendedName>
</protein>
<accession>A1SLE8</accession>
<gene>
    <name evidence="1" type="primary">trpD</name>
    <name type="ordered locus">Noca_3131</name>
</gene>
<proteinExistence type="inferred from homology"/>
<comment type="function">
    <text evidence="1">Catalyzes the transfer of the phosphoribosyl group of 5-phosphorylribose-1-pyrophosphate (PRPP) to anthranilate to yield N-(5'-phosphoribosyl)-anthranilate (PRA).</text>
</comment>
<comment type="catalytic activity">
    <reaction evidence="1">
        <text>N-(5-phospho-beta-D-ribosyl)anthranilate + diphosphate = 5-phospho-alpha-D-ribose 1-diphosphate + anthranilate</text>
        <dbReference type="Rhea" id="RHEA:11768"/>
        <dbReference type="ChEBI" id="CHEBI:16567"/>
        <dbReference type="ChEBI" id="CHEBI:18277"/>
        <dbReference type="ChEBI" id="CHEBI:33019"/>
        <dbReference type="ChEBI" id="CHEBI:58017"/>
        <dbReference type="EC" id="2.4.2.18"/>
    </reaction>
</comment>
<comment type="cofactor">
    <cofactor evidence="1">
        <name>Mg(2+)</name>
        <dbReference type="ChEBI" id="CHEBI:18420"/>
    </cofactor>
    <text evidence="1">Binds 2 magnesium ions per monomer.</text>
</comment>
<comment type="pathway">
    <text evidence="1">Amino-acid biosynthesis; L-tryptophan biosynthesis; L-tryptophan from chorismate: step 2/5.</text>
</comment>
<comment type="subunit">
    <text evidence="1">Homodimer.</text>
</comment>
<comment type="similarity">
    <text evidence="1">Belongs to the anthranilate phosphoribosyltransferase family.</text>
</comment>
<dbReference type="EC" id="2.4.2.18" evidence="1"/>
<dbReference type="EMBL" id="CP000509">
    <property type="protein sequence ID" value="ABL82633.1"/>
    <property type="molecule type" value="Genomic_DNA"/>
</dbReference>
<dbReference type="RefSeq" id="WP_011756567.1">
    <property type="nucleotide sequence ID" value="NC_008699.1"/>
</dbReference>
<dbReference type="SMR" id="A1SLE8"/>
<dbReference type="STRING" id="196162.Noca_3131"/>
<dbReference type="KEGG" id="nca:Noca_3131"/>
<dbReference type="eggNOG" id="COG0547">
    <property type="taxonomic scope" value="Bacteria"/>
</dbReference>
<dbReference type="HOGENOM" id="CLU_034315_4_1_11"/>
<dbReference type="OrthoDB" id="9806430at2"/>
<dbReference type="UniPathway" id="UPA00035">
    <property type="reaction ID" value="UER00041"/>
</dbReference>
<dbReference type="Proteomes" id="UP000000640">
    <property type="component" value="Chromosome"/>
</dbReference>
<dbReference type="GO" id="GO:0005829">
    <property type="term" value="C:cytosol"/>
    <property type="evidence" value="ECO:0007669"/>
    <property type="project" value="TreeGrafter"/>
</dbReference>
<dbReference type="GO" id="GO:0004048">
    <property type="term" value="F:anthranilate phosphoribosyltransferase activity"/>
    <property type="evidence" value="ECO:0007669"/>
    <property type="project" value="UniProtKB-UniRule"/>
</dbReference>
<dbReference type="GO" id="GO:0000287">
    <property type="term" value="F:magnesium ion binding"/>
    <property type="evidence" value="ECO:0007669"/>
    <property type="project" value="UniProtKB-UniRule"/>
</dbReference>
<dbReference type="GO" id="GO:0000162">
    <property type="term" value="P:L-tryptophan biosynthetic process"/>
    <property type="evidence" value="ECO:0007669"/>
    <property type="project" value="UniProtKB-UniRule"/>
</dbReference>
<dbReference type="FunFam" id="3.40.1030.10:FF:000002">
    <property type="entry name" value="Anthranilate phosphoribosyltransferase"/>
    <property type="match status" value="1"/>
</dbReference>
<dbReference type="Gene3D" id="3.40.1030.10">
    <property type="entry name" value="Nucleoside phosphorylase/phosphoribosyltransferase catalytic domain"/>
    <property type="match status" value="1"/>
</dbReference>
<dbReference type="Gene3D" id="1.20.970.10">
    <property type="entry name" value="Transferase, Pyrimidine Nucleoside Phosphorylase, Chain C"/>
    <property type="match status" value="1"/>
</dbReference>
<dbReference type="HAMAP" id="MF_00211">
    <property type="entry name" value="TrpD"/>
    <property type="match status" value="1"/>
</dbReference>
<dbReference type="InterPro" id="IPR005940">
    <property type="entry name" value="Anthranilate_Pribosyl_Tfrase"/>
</dbReference>
<dbReference type="InterPro" id="IPR000312">
    <property type="entry name" value="Glycosyl_Trfase_fam3"/>
</dbReference>
<dbReference type="InterPro" id="IPR017459">
    <property type="entry name" value="Glycosyl_Trfase_fam3_N_dom"/>
</dbReference>
<dbReference type="InterPro" id="IPR036320">
    <property type="entry name" value="Glycosyl_Trfase_fam3_N_dom_sf"/>
</dbReference>
<dbReference type="InterPro" id="IPR035902">
    <property type="entry name" value="Nuc_phospho_transferase"/>
</dbReference>
<dbReference type="NCBIfam" id="TIGR01245">
    <property type="entry name" value="trpD"/>
    <property type="match status" value="1"/>
</dbReference>
<dbReference type="PANTHER" id="PTHR43285">
    <property type="entry name" value="ANTHRANILATE PHOSPHORIBOSYLTRANSFERASE"/>
    <property type="match status" value="1"/>
</dbReference>
<dbReference type="PANTHER" id="PTHR43285:SF2">
    <property type="entry name" value="ANTHRANILATE PHOSPHORIBOSYLTRANSFERASE"/>
    <property type="match status" value="1"/>
</dbReference>
<dbReference type="Pfam" id="PF02885">
    <property type="entry name" value="Glycos_trans_3N"/>
    <property type="match status" value="1"/>
</dbReference>
<dbReference type="Pfam" id="PF00591">
    <property type="entry name" value="Glycos_transf_3"/>
    <property type="match status" value="1"/>
</dbReference>
<dbReference type="SUPFAM" id="SSF52418">
    <property type="entry name" value="Nucleoside phosphorylase/phosphoribosyltransferase catalytic domain"/>
    <property type="match status" value="1"/>
</dbReference>
<dbReference type="SUPFAM" id="SSF47648">
    <property type="entry name" value="Nucleoside phosphorylase/phosphoribosyltransferase N-terminal domain"/>
    <property type="match status" value="1"/>
</dbReference>
<sequence length="341" mass="35034">MSTWPEVLGALVAGSDLSADQTAWAMGEILSGEATVAQIAGFAIALRAKGETVEEVSGLVDTMYALATPISVPGRLLDIVGTGGDRSMSVNISTMSAIVAAGAGARVVKHGNRSASSQSGSADVLESLGIRLDLPAARLAEIAAEVGITFCFAAAFHPAMRYAAVPRRELGVGTTFNFLGPLTNPAHAHAQAIGCADPRMAPVMAGVFARRGVDAWVFRGDDGLDELTTTTTSRLWWVHGGEVRETSVDPADLGIARAEAGALRGGDAAHNAEVVRRLLAGETGAVRDAVVLNAGAALAVYDEPGSAPDQALVAGVERARESLDSGAAARVLDRWVAATAR</sequence>
<organism>
    <name type="scientific">Nocardioides sp. (strain ATCC BAA-499 / JS614)</name>
    <dbReference type="NCBI Taxonomy" id="196162"/>
    <lineage>
        <taxon>Bacteria</taxon>
        <taxon>Bacillati</taxon>
        <taxon>Actinomycetota</taxon>
        <taxon>Actinomycetes</taxon>
        <taxon>Propionibacteriales</taxon>
        <taxon>Nocardioidaceae</taxon>
        <taxon>Nocardioides</taxon>
    </lineage>
</organism>
<keyword id="KW-0028">Amino-acid biosynthesis</keyword>
<keyword id="KW-0057">Aromatic amino acid biosynthesis</keyword>
<keyword id="KW-0328">Glycosyltransferase</keyword>
<keyword id="KW-0460">Magnesium</keyword>
<keyword id="KW-0479">Metal-binding</keyword>
<keyword id="KW-1185">Reference proteome</keyword>
<keyword id="KW-0808">Transferase</keyword>
<keyword id="KW-0822">Tryptophan biosynthesis</keyword>
<evidence type="ECO:0000255" key="1">
    <source>
        <dbReference type="HAMAP-Rule" id="MF_00211"/>
    </source>
</evidence>